<dbReference type="EMBL" id="AY457925">
    <property type="protein sequence ID" value="AAR24283.1"/>
    <property type="molecule type" value="mRNA"/>
</dbReference>
<dbReference type="EMBL" id="CAAB01000338">
    <property type="status" value="NOT_ANNOTATED_CDS"/>
    <property type="molecule type" value="Genomic_DNA"/>
</dbReference>
<dbReference type="EMBL" id="BK005776">
    <property type="protein sequence ID" value="DAA06036.1"/>
    <property type="molecule type" value="mRNA"/>
</dbReference>
<dbReference type="RefSeq" id="NP_001027845.1">
    <property type="nucleotide sequence ID" value="NM_001032673.1"/>
</dbReference>
<dbReference type="RefSeq" id="XP_011617974.1">
    <property type="nucleotide sequence ID" value="XM_011619672.1"/>
</dbReference>
<dbReference type="SMR" id="Q6SJ94"/>
<dbReference type="FunCoup" id="Q6SJ94">
    <property type="interactions" value="1305"/>
</dbReference>
<dbReference type="STRING" id="31033.ENSTRUP00000023340"/>
<dbReference type="Ensembl" id="ENSTRUT00000023437.3">
    <property type="protein sequence ID" value="ENSTRUP00000023340.1"/>
    <property type="gene ID" value="ENSTRUG00000009283.3"/>
</dbReference>
<dbReference type="GeneID" id="446042"/>
<dbReference type="KEGG" id="tru:446042"/>
<dbReference type="CTD" id="387332"/>
<dbReference type="GeneTree" id="ENSGT00940000159561"/>
<dbReference type="InParanoid" id="Q6SJ94"/>
<dbReference type="OrthoDB" id="2127950at2759"/>
<dbReference type="Proteomes" id="UP000005226">
    <property type="component" value="Chromosome 2"/>
</dbReference>
<dbReference type="GO" id="GO:0005634">
    <property type="term" value="C:nucleus"/>
    <property type="evidence" value="ECO:0000250"/>
    <property type="project" value="UniProtKB"/>
</dbReference>
<dbReference type="GO" id="GO:0003677">
    <property type="term" value="F:DNA binding"/>
    <property type="evidence" value="ECO:0000250"/>
    <property type="project" value="UniProtKB"/>
</dbReference>
<dbReference type="GO" id="GO:0000976">
    <property type="term" value="F:transcription cis-regulatory region binding"/>
    <property type="evidence" value="ECO:0007669"/>
    <property type="project" value="Ensembl"/>
</dbReference>
<dbReference type="GO" id="GO:0006352">
    <property type="term" value="P:DNA-templated transcription initiation"/>
    <property type="evidence" value="ECO:0007669"/>
    <property type="project" value="Ensembl"/>
</dbReference>
<dbReference type="GO" id="GO:0009792">
    <property type="term" value="P:embryo development ending in birth or egg hatching"/>
    <property type="evidence" value="ECO:0000250"/>
    <property type="project" value="UniProtKB"/>
</dbReference>
<dbReference type="GO" id="GO:0009880">
    <property type="term" value="P:embryonic pattern specification"/>
    <property type="evidence" value="ECO:0000250"/>
    <property type="project" value="UniProtKB"/>
</dbReference>
<dbReference type="GO" id="GO:0030097">
    <property type="term" value="P:hemopoiesis"/>
    <property type="evidence" value="ECO:0000250"/>
    <property type="project" value="UniProtKB"/>
</dbReference>
<dbReference type="CDD" id="cd04516">
    <property type="entry name" value="TBP_eukaryotes"/>
    <property type="match status" value="1"/>
</dbReference>
<dbReference type="FunFam" id="3.30.310.10:FF:000001">
    <property type="entry name" value="TATA-box-binding protein 2"/>
    <property type="match status" value="1"/>
</dbReference>
<dbReference type="FunFam" id="3.30.310.10:FF:000002">
    <property type="entry name" value="TATA-box-binding protein 2"/>
    <property type="match status" value="1"/>
</dbReference>
<dbReference type="Gene3D" id="3.30.310.10">
    <property type="entry name" value="TATA-Binding Protein"/>
    <property type="match status" value="2"/>
</dbReference>
<dbReference type="HAMAP" id="MF_00408">
    <property type="entry name" value="TATA_bind_prot_arch"/>
    <property type="match status" value="1"/>
</dbReference>
<dbReference type="InterPro" id="IPR000814">
    <property type="entry name" value="TBP"/>
</dbReference>
<dbReference type="InterPro" id="IPR030491">
    <property type="entry name" value="TBP_CS"/>
</dbReference>
<dbReference type="InterPro" id="IPR012295">
    <property type="entry name" value="TBP_dom_sf"/>
</dbReference>
<dbReference type="InterPro" id="IPR033710">
    <property type="entry name" value="TBP_eukaryotic"/>
</dbReference>
<dbReference type="PANTHER" id="PTHR10126">
    <property type="entry name" value="TATA-BOX BINDING PROTEIN"/>
    <property type="match status" value="1"/>
</dbReference>
<dbReference type="Pfam" id="PF00352">
    <property type="entry name" value="TBP"/>
    <property type="match status" value="2"/>
</dbReference>
<dbReference type="PRINTS" id="PR00686">
    <property type="entry name" value="TIFACTORIID"/>
</dbReference>
<dbReference type="SUPFAM" id="SSF55945">
    <property type="entry name" value="TATA-box binding protein-like"/>
    <property type="match status" value="2"/>
</dbReference>
<dbReference type="PROSITE" id="PS00351">
    <property type="entry name" value="TFIID"/>
    <property type="match status" value="2"/>
</dbReference>
<reference evidence="7" key="1">
    <citation type="journal article" date="2003" name="Proc. Natl. Acad. Sci. U.S.A.">
        <title>TRF3, a TATA-box-binding protein-related factor, is vertebrate-specific and widely expressed.</title>
        <authorList>
            <person name="Persengiev S.P."/>
            <person name="Zhu X."/>
            <person name="Dixit B.L."/>
            <person name="Maston G.A."/>
            <person name="Kittler E.L.W."/>
            <person name="Green M.R."/>
        </authorList>
    </citation>
    <scope>NUCLEOTIDE SEQUENCE [MRNA]</scope>
    <source>
        <tissue evidence="7">Ovary</tissue>
    </source>
</reference>
<reference evidence="6" key="2">
    <citation type="submission" date="2002-07" db="EMBL/GenBank/DDBJ databases">
        <authorList>
            <consortium name="The Fugu genome sequencing consortium"/>
        </authorList>
    </citation>
    <scope>NUCLEOTIDE SEQUENCE [LARGE SCALE GENOMIC DNA]</scope>
</reference>
<reference evidence="6 8" key="3">
    <citation type="journal article" date="2007" name="DNA Cell Biol.">
        <title>Genomics, evolution, and expression of TBPL2, a member of the TBP family.</title>
        <authorList>
            <person name="Di Pietro C."/>
            <person name="Ragusa M."/>
            <person name="Duro L."/>
            <person name="Guglielmino M.R."/>
            <person name="Barbagallo D."/>
            <person name="Carnemolla A."/>
            <person name="Lagana A."/>
            <person name="Buffa P."/>
            <person name="Angelica R."/>
            <person name="Rinaldi A."/>
            <person name="Calafato M.S."/>
            <person name="Milicia I."/>
            <person name="Caserta C."/>
            <person name="Giugno R."/>
            <person name="Pulvirenti A."/>
            <person name="Giunta V."/>
            <person name="Rapisarda A."/>
            <person name="Di Pietro V."/>
            <person name="Grillo A."/>
            <person name="Messina A."/>
            <person name="Ferro A."/>
            <person name="Grzeschik K.H."/>
            <person name="Purrello M."/>
        </authorList>
    </citation>
    <scope>IDENTIFICATION</scope>
</reference>
<protein>
    <recommendedName>
        <fullName evidence="5">TATA box-binding protein-like 2</fullName>
        <shortName evidence="5">TBP-like 2</shortName>
    </recommendedName>
    <alternativeName>
        <fullName evidence="4">TATA box-binding protein-related factor 3</fullName>
        <shortName evidence="4">TBP-related factor 3</shortName>
    </alternativeName>
</protein>
<sequence length="322" mass="35721">MDESALERYFEDSIANDSGFILEEELGLHSPALSSTQDSTYLSGRAGPSRESGAELDLSFLPDDLSTQEELGHHDNTAQAEDRAVSQDSAVCLDYDSQNSATPAATFDQQNPSLLGGGVHNSPFYSMTPMTPMTPMTPVTERSGIIPQLQNIVSTVNLGCPLDLKFIALQARNAEYNPKRFAAVIMRIREPRTTALIFSSGKMVCTGAKSEEQSRLAARKYARVVQKLGFPARFMDFKIQNMVASCDVCFPIRLEGLVLTHQQFSSYEPELFPGLIYRMVKPRIVLLIFVSGKVVLTGAKERAEIYEAFENIYPILRGFRKQ</sequence>
<accession>Q6SJ94</accession>
<name>TBPL2_TAKRU</name>
<comment type="function">
    <text evidence="1">TATA box-binding transcription factor. Members of the TBP family are differentially required to regulate transcription and development during early embryogenesis (By similarity).</text>
</comment>
<comment type="subcellular location">
    <subcellularLocation>
        <location evidence="1">Nucleus</location>
    </subcellularLocation>
</comment>
<comment type="similarity">
    <text evidence="2">Belongs to the TBP family.</text>
</comment>
<gene>
    <name evidence="5" type="primary">tbpl2</name>
    <name evidence="1" type="synonym">tbp2</name>
    <name evidence="7" type="synonym">trf3</name>
</gene>
<proteinExistence type="evidence at transcript level"/>
<organism>
    <name type="scientific">Takifugu rubripes</name>
    <name type="common">Japanese pufferfish</name>
    <name type="synonym">Fugu rubripes</name>
    <dbReference type="NCBI Taxonomy" id="31033"/>
    <lineage>
        <taxon>Eukaryota</taxon>
        <taxon>Metazoa</taxon>
        <taxon>Chordata</taxon>
        <taxon>Craniata</taxon>
        <taxon>Vertebrata</taxon>
        <taxon>Euteleostomi</taxon>
        <taxon>Actinopterygii</taxon>
        <taxon>Neopterygii</taxon>
        <taxon>Teleostei</taxon>
        <taxon>Neoteleostei</taxon>
        <taxon>Acanthomorphata</taxon>
        <taxon>Eupercaria</taxon>
        <taxon>Tetraodontiformes</taxon>
        <taxon>Tetradontoidea</taxon>
        <taxon>Tetraodontidae</taxon>
        <taxon>Takifugu</taxon>
    </lineage>
</organism>
<evidence type="ECO:0000250" key="1">
    <source>
        <dbReference type="UniProtKB" id="Q5UE94"/>
    </source>
</evidence>
<evidence type="ECO:0000255" key="2"/>
<evidence type="ECO:0000256" key="3">
    <source>
        <dbReference type="SAM" id="MobiDB-lite"/>
    </source>
</evidence>
<evidence type="ECO:0000303" key="4">
    <source>
    </source>
</evidence>
<evidence type="ECO:0000303" key="5">
    <source>
    </source>
</evidence>
<evidence type="ECO:0000305" key="6"/>
<evidence type="ECO:0000312" key="7">
    <source>
        <dbReference type="EMBL" id="AAR24283.1"/>
    </source>
</evidence>
<evidence type="ECO:0000312" key="8">
    <source>
        <dbReference type="EMBL" id="DAA06036.1"/>
    </source>
</evidence>
<feature type="chain" id="PRO_0000349149" description="TATA box-binding protein-like 2">
    <location>
        <begin position="1"/>
        <end position="322"/>
    </location>
</feature>
<feature type="region of interest" description="Disordered" evidence="3">
    <location>
        <begin position="31"/>
        <end position="54"/>
    </location>
</feature>
<feature type="compositionally biased region" description="Polar residues" evidence="3">
    <location>
        <begin position="32"/>
        <end position="42"/>
    </location>
</feature>
<keyword id="KW-0217">Developmental protein</keyword>
<keyword id="KW-0238">DNA-binding</keyword>
<keyword id="KW-0539">Nucleus</keyword>
<keyword id="KW-1185">Reference proteome</keyword>
<keyword id="KW-0804">Transcription</keyword>
<keyword id="KW-0805">Transcription regulation</keyword>